<name>UPPP_MICLC</name>
<gene>
    <name evidence="1" type="primary">uppP</name>
    <name type="ordered locus">Mlut_11800</name>
</gene>
<proteinExistence type="inferred from homology"/>
<feature type="chain" id="PRO_1000213154" description="Undecaprenyl-diphosphatase">
    <location>
        <begin position="1"/>
        <end position="277"/>
    </location>
</feature>
<feature type="transmembrane region" description="Helical" evidence="1">
    <location>
        <begin position="1"/>
        <end position="21"/>
    </location>
</feature>
<feature type="transmembrane region" description="Helical" evidence="1">
    <location>
        <begin position="41"/>
        <end position="61"/>
    </location>
</feature>
<feature type="transmembrane region" description="Helical" evidence="1">
    <location>
        <begin position="90"/>
        <end position="110"/>
    </location>
</feature>
<feature type="transmembrane region" description="Helical" evidence="1">
    <location>
        <begin position="114"/>
        <end position="134"/>
    </location>
</feature>
<feature type="transmembrane region" description="Helical" evidence="1">
    <location>
        <begin position="191"/>
        <end position="211"/>
    </location>
</feature>
<feature type="transmembrane region" description="Helical" evidence="1">
    <location>
        <begin position="224"/>
        <end position="244"/>
    </location>
</feature>
<feature type="transmembrane region" description="Helical" evidence="1">
    <location>
        <begin position="255"/>
        <end position="275"/>
    </location>
</feature>
<keyword id="KW-0046">Antibiotic resistance</keyword>
<keyword id="KW-1003">Cell membrane</keyword>
<keyword id="KW-0133">Cell shape</keyword>
<keyword id="KW-0961">Cell wall biogenesis/degradation</keyword>
<keyword id="KW-0378">Hydrolase</keyword>
<keyword id="KW-0472">Membrane</keyword>
<keyword id="KW-0573">Peptidoglycan synthesis</keyword>
<keyword id="KW-1185">Reference proteome</keyword>
<keyword id="KW-0812">Transmembrane</keyword>
<keyword id="KW-1133">Transmembrane helix</keyword>
<dbReference type="EC" id="3.6.1.27" evidence="1"/>
<dbReference type="EMBL" id="CP001628">
    <property type="protein sequence ID" value="ACS30685.1"/>
    <property type="molecule type" value="Genomic_DNA"/>
</dbReference>
<dbReference type="RefSeq" id="WP_010078676.1">
    <property type="nucleotide sequence ID" value="NC_012803.1"/>
</dbReference>
<dbReference type="SMR" id="C5CBT8"/>
<dbReference type="STRING" id="465515.Mlut_11800"/>
<dbReference type="EnsemblBacteria" id="ACS30685">
    <property type="protein sequence ID" value="ACS30685"/>
    <property type="gene ID" value="Mlut_11800"/>
</dbReference>
<dbReference type="GeneID" id="93345337"/>
<dbReference type="KEGG" id="mlu:Mlut_11800"/>
<dbReference type="PATRIC" id="fig|465515.4.peg.1121"/>
<dbReference type="eggNOG" id="COG1968">
    <property type="taxonomic scope" value="Bacteria"/>
</dbReference>
<dbReference type="HOGENOM" id="CLU_060296_1_0_11"/>
<dbReference type="BRENDA" id="3.6.1.27">
    <property type="organism ID" value="3348"/>
</dbReference>
<dbReference type="SABIO-RK" id="C5CBT8"/>
<dbReference type="Proteomes" id="UP000000738">
    <property type="component" value="Chromosome"/>
</dbReference>
<dbReference type="GO" id="GO:0005886">
    <property type="term" value="C:plasma membrane"/>
    <property type="evidence" value="ECO:0007669"/>
    <property type="project" value="UniProtKB-SubCell"/>
</dbReference>
<dbReference type="GO" id="GO:0050380">
    <property type="term" value="F:undecaprenyl-diphosphatase activity"/>
    <property type="evidence" value="ECO:0007669"/>
    <property type="project" value="UniProtKB-UniRule"/>
</dbReference>
<dbReference type="GO" id="GO:0071555">
    <property type="term" value="P:cell wall organization"/>
    <property type="evidence" value="ECO:0007669"/>
    <property type="project" value="UniProtKB-KW"/>
</dbReference>
<dbReference type="GO" id="GO:0009252">
    <property type="term" value="P:peptidoglycan biosynthetic process"/>
    <property type="evidence" value="ECO:0007669"/>
    <property type="project" value="UniProtKB-KW"/>
</dbReference>
<dbReference type="GO" id="GO:0008360">
    <property type="term" value="P:regulation of cell shape"/>
    <property type="evidence" value="ECO:0007669"/>
    <property type="project" value="UniProtKB-KW"/>
</dbReference>
<dbReference type="GO" id="GO:0046677">
    <property type="term" value="P:response to antibiotic"/>
    <property type="evidence" value="ECO:0007669"/>
    <property type="project" value="UniProtKB-UniRule"/>
</dbReference>
<dbReference type="HAMAP" id="MF_01006">
    <property type="entry name" value="Undec_diphosphatase"/>
    <property type="match status" value="1"/>
</dbReference>
<dbReference type="InterPro" id="IPR003824">
    <property type="entry name" value="UppP"/>
</dbReference>
<dbReference type="NCBIfam" id="NF001392">
    <property type="entry name" value="PRK00281.2-1"/>
    <property type="match status" value="1"/>
</dbReference>
<dbReference type="NCBIfam" id="TIGR00753">
    <property type="entry name" value="undec_PP_bacA"/>
    <property type="match status" value="1"/>
</dbReference>
<dbReference type="PANTHER" id="PTHR30622">
    <property type="entry name" value="UNDECAPRENYL-DIPHOSPHATASE"/>
    <property type="match status" value="1"/>
</dbReference>
<dbReference type="PANTHER" id="PTHR30622:SF4">
    <property type="entry name" value="UNDECAPRENYL-DIPHOSPHATASE"/>
    <property type="match status" value="1"/>
</dbReference>
<dbReference type="Pfam" id="PF02673">
    <property type="entry name" value="BacA"/>
    <property type="match status" value="1"/>
</dbReference>
<sequence length="277" mass="29720">MTWIEAIILGLVQGLTEFLPISSSAHIRIVGEFLPSATDPGAAFTAITQLGTELAVLIYFWRDITRIIGRWSAAVTGRIPHSDPDARMGWLIIVGSIPIAVLGLLLEDWIDTEFRSLWITATMLIVFGVLLALADRLGRQTKPLEKLTVRDGVLYGLAQALALIPGVSRSGGTIAAGLAMGYTRPAATRYAFLLAVPAVFASGLYKLYTSLTDPGTQGPYGMGETLVATAVAFVVAYAVIAWLMRFISTNSYLPFVWYRILLGGVLFALLGAGVISA</sequence>
<protein>
    <recommendedName>
        <fullName evidence="1">Undecaprenyl-diphosphatase</fullName>
        <ecNumber evidence="1">3.6.1.27</ecNumber>
    </recommendedName>
    <alternativeName>
        <fullName evidence="1">Bacitracin resistance protein</fullName>
    </alternativeName>
    <alternativeName>
        <fullName evidence="1">Undecaprenyl pyrophosphate phosphatase</fullName>
    </alternativeName>
</protein>
<evidence type="ECO:0000255" key="1">
    <source>
        <dbReference type="HAMAP-Rule" id="MF_01006"/>
    </source>
</evidence>
<accession>C5CBT8</accession>
<comment type="function">
    <text evidence="1">Catalyzes the dephosphorylation of undecaprenyl diphosphate (UPP). Confers resistance to bacitracin.</text>
</comment>
<comment type="catalytic activity">
    <reaction evidence="1">
        <text>di-trans,octa-cis-undecaprenyl diphosphate + H2O = di-trans,octa-cis-undecaprenyl phosphate + phosphate + H(+)</text>
        <dbReference type="Rhea" id="RHEA:28094"/>
        <dbReference type="ChEBI" id="CHEBI:15377"/>
        <dbReference type="ChEBI" id="CHEBI:15378"/>
        <dbReference type="ChEBI" id="CHEBI:43474"/>
        <dbReference type="ChEBI" id="CHEBI:58405"/>
        <dbReference type="ChEBI" id="CHEBI:60392"/>
        <dbReference type="EC" id="3.6.1.27"/>
    </reaction>
</comment>
<comment type="subcellular location">
    <subcellularLocation>
        <location evidence="1">Cell membrane</location>
        <topology evidence="1">Multi-pass membrane protein</topology>
    </subcellularLocation>
</comment>
<comment type="miscellaneous">
    <text>Bacitracin is thought to be involved in the inhibition of peptidoglycan synthesis by sequestering undecaprenyl diphosphate, thereby reducing the pool of lipid carrier available.</text>
</comment>
<comment type="similarity">
    <text evidence="1">Belongs to the UppP family.</text>
</comment>
<reference key="1">
    <citation type="journal article" date="2010" name="J. Bacteriol.">
        <title>Genome sequence of the Fleming strain of Micrococcus luteus, a simple free-living actinobacterium.</title>
        <authorList>
            <person name="Young M."/>
            <person name="Artsatbanov V."/>
            <person name="Beller H.R."/>
            <person name="Chandra G."/>
            <person name="Chater K.F."/>
            <person name="Dover L.G."/>
            <person name="Goh E.B."/>
            <person name="Kahan T."/>
            <person name="Kaprelyants A.S."/>
            <person name="Kyrpides N."/>
            <person name="Lapidus A."/>
            <person name="Lowry S.R."/>
            <person name="Lykidis A."/>
            <person name="Mahillon J."/>
            <person name="Markowitz V."/>
            <person name="Mavromatis K."/>
            <person name="Mukamolova G.V."/>
            <person name="Oren A."/>
            <person name="Rokem J.S."/>
            <person name="Smith M.C."/>
            <person name="Young D.I."/>
            <person name="Greenblatt C.L."/>
        </authorList>
    </citation>
    <scope>NUCLEOTIDE SEQUENCE [LARGE SCALE GENOMIC DNA]</scope>
    <source>
        <strain>ATCC 4698 / DSM 20030 / JCM 1464 / CCM 169 / CCUG 5858 / IAM 1056 / NBRC 3333 / NCIMB 9278 / NCTC 2665 / VKM Ac-2230</strain>
    </source>
</reference>
<organism>
    <name type="scientific">Micrococcus luteus (strain ATCC 4698 / DSM 20030 / JCM 1464 / CCM 169 / CCUG 5858 / IAM 1056 / NBRC 3333 / NCIMB 9278 / NCTC 2665 / VKM Ac-2230)</name>
    <name type="common">Micrococcus lysodeikticus</name>
    <dbReference type="NCBI Taxonomy" id="465515"/>
    <lineage>
        <taxon>Bacteria</taxon>
        <taxon>Bacillati</taxon>
        <taxon>Actinomycetota</taxon>
        <taxon>Actinomycetes</taxon>
        <taxon>Micrococcales</taxon>
        <taxon>Micrococcaceae</taxon>
        <taxon>Micrococcus</taxon>
    </lineage>
</organism>